<dbReference type="EMBL" id="CP000950">
    <property type="protein sequence ID" value="ACA66582.1"/>
    <property type="molecule type" value="Genomic_DNA"/>
</dbReference>
<dbReference type="RefSeq" id="WP_002212317.1">
    <property type="nucleotide sequence ID" value="NZ_CP009792.1"/>
</dbReference>
<dbReference type="SMR" id="B1JIU7"/>
<dbReference type="KEGG" id="ypy:YPK_0269"/>
<dbReference type="PATRIC" id="fig|502800.11.peg.875"/>
<dbReference type="Gene3D" id="1.20.5.300">
    <property type="match status" value="1"/>
</dbReference>
<dbReference type="HAMAP" id="MF_00715">
    <property type="entry name" value="SlyX"/>
    <property type="match status" value="1"/>
</dbReference>
<dbReference type="InterPro" id="IPR007236">
    <property type="entry name" value="SlyX"/>
</dbReference>
<dbReference type="NCBIfam" id="NF002750">
    <property type="entry name" value="PRK02793.1"/>
    <property type="match status" value="1"/>
</dbReference>
<dbReference type="PANTHER" id="PTHR36508">
    <property type="entry name" value="PROTEIN SLYX"/>
    <property type="match status" value="1"/>
</dbReference>
<dbReference type="PANTHER" id="PTHR36508:SF1">
    <property type="entry name" value="PROTEIN SLYX"/>
    <property type="match status" value="1"/>
</dbReference>
<dbReference type="Pfam" id="PF04102">
    <property type="entry name" value="SlyX"/>
    <property type="match status" value="1"/>
</dbReference>
<name>SLYX_YERPY</name>
<comment type="similarity">
    <text evidence="1">Belongs to the SlyX family.</text>
</comment>
<gene>
    <name evidence="1" type="primary">slyX</name>
    <name type="ordered locus">YPK_0269</name>
</gene>
<evidence type="ECO:0000255" key="1">
    <source>
        <dbReference type="HAMAP-Rule" id="MF_00715"/>
    </source>
</evidence>
<evidence type="ECO:0000256" key="2">
    <source>
        <dbReference type="SAM" id="MobiDB-lite"/>
    </source>
</evidence>
<feature type="chain" id="PRO_1000195866" description="Protein SlyX">
    <location>
        <begin position="1"/>
        <end position="72"/>
    </location>
</feature>
<feature type="region of interest" description="Disordered" evidence="2">
    <location>
        <begin position="52"/>
        <end position="72"/>
    </location>
</feature>
<feature type="compositionally biased region" description="Polar residues" evidence="2">
    <location>
        <begin position="55"/>
        <end position="65"/>
    </location>
</feature>
<proteinExistence type="inferred from homology"/>
<accession>B1JIU7</accession>
<organism>
    <name type="scientific">Yersinia pseudotuberculosis serotype O:3 (strain YPIII)</name>
    <dbReference type="NCBI Taxonomy" id="502800"/>
    <lineage>
        <taxon>Bacteria</taxon>
        <taxon>Pseudomonadati</taxon>
        <taxon>Pseudomonadota</taxon>
        <taxon>Gammaproteobacteria</taxon>
        <taxon>Enterobacterales</taxon>
        <taxon>Yersiniaceae</taxon>
        <taxon>Yersinia</taxon>
    </lineage>
</organism>
<protein>
    <recommendedName>
        <fullName evidence="1">Protein SlyX</fullName>
    </recommendedName>
</protein>
<reference key="1">
    <citation type="submission" date="2008-02" db="EMBL/GenBank/DDBJ databases">
        <title>Complete sequence of Yersinia pseudotuberculosis YPIII.</title>
        <authorList>
            <consortium name="US DOE Joint Genome Institute"/>
            <person name="Copeland A."/>
            <person name="Lucas S."/>
            <person name="Lapidus A."/>
            <person name="Glavina del Rio T."/>
            <person name="Dalin E."/>
            <person name="Tice H."/>
            <person name="Bruce D."/>
            <person name="Goodwin L."/>
            <person name="Pitluck S."/>
            <person name="Munk A.C."/>
            <person name="Brettin T."/>
            <person name="Detter J.C."/>
            <person name="Han C."/>
            <person name="Tapia R."/>
            <person name="Schmutz J."/>
            <person name="Larimer F."/>
            <person name="Land M."/>
            <person name="Hauser L."/>
            <person name="Challacombe J.F."/>
            <person name="Green L."/>
            <person name="Lindler L.E."/>
            <person name="Nikolich M.P."/>
            <person name="Richardson P."/>
        </authorList>
    </citation>
    <scope>NUCLEOTIDE SEQUENCE [LARGE SCALE GENOMIC DNA]</scope>
    <source>
        <strain>YPIII</strain>
    </source>
</reference>
<sequence length="72" mass="8523">MEQSLLEQRLEMLESRLAFQEVTIEELNLIVTEHQMEMTKLREHLRLLTDKLRESQSSMLASPSEETPPPHY</sequence>